<comment type="function">
    <text evidence="1">DNA-dependent RNA polymerase catalyzes the transcription of DNA into RNA using the four ribonucleoside triphosphates as substrates.</text>
</comment>
<comment type="catalytic activity">
    <reaction evidence="1">
        <text>RNA(n) + a ribonucleoside 5'-triphosphate = RNA(n+1) + diphosphate</text>
        <dbReference type="Rhea" id="RHEA:21248"/>
        <dbReference type="Rhea" id="RHEA-COMP:14527"/>
        <dbReference type="Rhea" id="RHEA-COMP:17342"/>
        <dbReference type="ChEBI" id="CHEBI:33019"/>
        <dbReference type="ChEBI" id="CHEBI:61557"/>
        <dbReference type="ChEBI" id="CHEBI:140395"/>
        <dbReference type="EC" id="2.7.7.6"/>
    </reaction>
</comment>
<comment type="subunit">
    <text evidence="1">The RNAP catalytic core consists of 2 alpha, 1 beta, 1 beta' and 1 omega subunit. When a sigma factor is associated with the core the holoenzyme is formed, which can initiate transcription.</text>
</comment>
<comment type="similarity">
    <text evidence="1">Belongs to the RNA polymerase beta chain family.</text>
</comment>
<comment type="sequence caution" evidence="2">
    <conflict type="erroneous initiation">
        <sequence resource="EMBL-CDS" id="ABD53485"/>
    </conflict>
</comment>
<name>RPOB_JANSC</name>
<organism>
    <name type="scientific">Jannaschia sp. (strain CCS1)</name>
    <dbReference type="NCBI Taxonomy" id="290400"/>
    <lineage>
        <taxon>Bacteria</taxon>
        <taxon>Pseudomonadati</taxon>
        <taxon>Pseudomonadota</taxon>
        <taxon>Alphaproteobacteria</taxon>
        <taxon>Rhodobacterales</taxon>
        <taxon>Roseobacteraceae</taxon>
        <taxon>Jannaschia</taxon>
    </lineage>
</organism>
<dbReference type="EC" id="2.7.7.6" evidence="1"/>
<dbReference type="EMBL" id="CP000264">
    <property type="protein sequence ID" value="ABD53485.1"/>
    <property type="status" value="ALT_INIT"/>
    <property type="molecule type" value="Genomic_DNA"/>
</dbReference>
<dbReference type="RefSeq" id="WP_011453694.1">
    <property type="nucleotide sequence ID" value="NC_007802.1"/>
</dbReference>
<dbReference type="SMR" id="Q28UX7"/>
<dbReference type="STRING" id="290400.Jann_0568"/>
<dbReference type="KEGG" id="jan:Jann_0568"/>
<dbReference type="eggNOG" id="COG0085">
    <property type="taxonomic scope" value="Bacteria"/>
</dbReference>
<dbReference type="HOGENOM" id="CLU_000524_4_0_5"/>
<dbReference type="OrthoDB" id="9803954at2"/>
<dbReference type="Proteomes" id="UP000008326">
    <property type="component" value="Chromosome"/>
</dbReference>
<dbReference type="GO" id="GO:0000428">
    <property type="term" value="C:DNA-directed RNA polymerase complex"/>
    <property type="evidence" value="ECO:0007669"/>
    <property type="project" value="UniProtKB-KW"/>
</dbReference>
<dbReference type="GO" id="GO:0003677">
    <property type="term" value="F:DNA binding"/>
    <property type="evidence" value="ECO:0007669"/>
    <property type="project" value="UniProtKB-UniRule"/>
</dbReference>
<dbReference type="GO" id="GO:0003899">
    <property type="term" value="F:DNA-directed RNA polymerase activity"/>
    <property type="evidence" value="ECO:0007669"/>
    <property type="project" value="UniProtKB-UniRule"/>
</dbReference>
<dbReference type="GO" id="GO:0032549">
    <property type="term" value="F:ribonucleoside binding"/>
    <property type="evidence" value="ECO:0007669"/>
    <property type="project" value="InterPro"/>
</dbReference>
<dbReference type="GO" id="GO:0006351">
    <property type="term" value="P:DNA-templated transcription"/>
    <property type="evidence" value="ECO:0007669"/>
    <property type="project" value="UniProtKB-UniRule"/>
</dbReference>
<dbReference type="CDD" id="cd00653">
    <property type="entry name" value="RNA_pol_B_RPB2"/>
    <property type="match status" value="1"/>
</dbReference>
<dbReference type="FunFam" id="2.40.50.100:FF:000006">
    <property type="entry name" value="DNA-directed RNA polymerase subunit beta"/>
    <property type="match status" value="1"/>
</dbReference>
<dbReference type="FunFam" id="3.90.1800.10:FF:000001">
    <property type="entry name" value="DNA-directed RNA polymerase subunit beta"/>
    <property type="match status" value="1"/>
</dbReference>
<dbReference type="Gene3D" id="2.40.50.100">
    <property type="match status" value="1"/>
</dbReference>
<dbReference type="Gene3D" id="2.40.50.150">
    <property type="match status" value="1"/>
</dbReference>
<dbReference type="Gene3D" id="3.90.1100.10">
    <property type="match status" value="2"/>
</dbReference>
<dbReference type="Gene3D" id="2.30.150.10">
    <property type="entry name" value="DNA-directed RNA polymerase, beta subunit, external 1 domain"/>
    <property type="match status" value="1"/>
</dbReference>
<dbReference type="Gene3D" id="2.40.270.10">
    <property type="entry name" value="DNA-directed RNA polymerase, subunit 2, domain 6"/>
    <property type="match status" value="1"/>
</dbReference>
<dbReference type="Gene3D" id="3.90.1800.10">
    <property type="entry name" value="RNA polymerase alpha subunit dimerisation domain"/>
    <property type="match status" value="1"/>
</dbReference>
<dbReference type="Gene3D" id="3.90.1110.10">
    <property type="entry name" value="RNA polymerase Rpb2, domain 2"/>
    <property type="match status" value="1"/>
</dbReference>
<dbReference type="HAMAP" id="MF_01321">
    <property type="entry name" value="RNApol_bact_RpoB"/>
    <property type="match status" value="1"/>
</dbReference>
<dbReference type="InterPro" id="IPR042107">
    <property type="entry name" value="DNA-dir_RNA_pol_bsu_ext_1_sf"/>
</dbReference>
<dbReference type="InterPro" id="IPR019462">
    <property type="entry name" value="DNA-dir_RNA_pol_bsu_external_1"/>
</dbReference>
<dbReference type="InterPro" id="IPR015712">
    <property type="entry name" value="DNA-dir_RNA_pol_su2"/>
</dbReference>
<dbReference type="InterPro" id="IPR007120">
    <property type="entry name" value="DNA-dir_RNAP_su2_dom"/>
</dbReference>
<dbReference type="InterPro" id="IPR037033">
    <property type="entry name" value="DNA-dir_RNAP_su2_hyb_sf"/>
</dbReference>
<dbReference type="InterPro" id="IPR010243">
    <property type="entry name" value="RNA_pol_bsu_bac"/>
</dbReference>
<dbReference type="InterPro" id="IPR007121">
    <property type="entry name" value="RNA_pol_bsu_CS"/>
</dbReference>
<dbReference type="InterPro" id="IPR007644">
    <property type="entry name" value="RNA_pol_bsu_protrusion"/>
</dbReference>
<dbReference type="InterPro" id="IPR007642">
    <property type="entry name" value="RNA_pol_Rpb2_2"/>
</dbReference>
<dbReference type="InterPro" id="IPR037034">
    <property type="entry name" value="RNA_pol_Rpb2_2_sf"/>
</dbReference>
<dbReference type="InterPro" id="IPR007645">
    <property type="entry name" value="RNA_pol_Rpb2_3"/>
</dbReference>
<dbReference type="InterPro" id="IPR007641">
    <property type="entry name" value="RNA_pol_Rpb2_7"/>
</dbReference>
<dbReference type="InterPro" id="IPR014724">
    <property type="entry name" value="RNA_pol_RPB2_OB-fold"/>
</dbReference>
<dbReference type="NCBIfam" id="NF001616">
    <property type="entry name" value="PRK00405.1"/>
    <property type="match status" value="1"/>
</dbReference>
<dbReference type="NCBIfam" id="TIGR02013">
    <property type="entry name" value="rpoB"/>
    <property type="match status" value="1"/>
</dbReference>
<dbReference type="PANTHER" id="PTHR20856">
    <property type="entry name" value="DNA-DIRECTED RNA POLYMERASE I SUBUNIT 2"/>
    <property type="match status" value="1"/>
</dbReference>
<dbReference type="Pfam" id="PF04563">
    <property type="entry name" value="RNA_pol_Rpb2_1"/>
    <property type="match status" value="1"/>
</dbReference>
<dbReference type="Pfam" id="PF04561">
    <property type="entry name" value="RNA_pol_Rpb2_2"/>
    <property type="match status" value="2"/>
</dbReference>
<dbReference type="Pfam" id="PF04565">
    <property type="entry name" value="RNA_pol_Rpb2_3"/>
    <property type="match status" value="1"/>
</dbReference>
<dbReference type="Pfam" id="PF10385">
    <property type="entry name" value="RNA_pol_Rpb2_45"/>
    <property type="match status" value="1"/>
</dbReference>
<dbReference type="Pfam" id="PF00562">
    <property type="entry name" value="RNA_pol_Rpb2_6"/>
    <property type="match status" value="1"/>
</dbReference>
<dbReference type="Pfam" id="PF04560">
    <property type="entry name" value="RNA_pol_Rpb2_7"/>
    <property type="match status" value="1"/>
</dbReference>
<dbReference type="SUPFAM" id="SSF64484">
    <property type="entry name" value="beta and beta-prime subunits of DNA dependent RNA-polymerase"/>
    <property type="match status" value="1"/>
</dbReference>
<dbReference type="PROSITE" id="PS01166">
    <property type="entry name" value="RNA_POL_BETA"/>
    <property type="match status" value="1"/>
</dbReference>
<proteinExistence type="inferred from homology"/>
<reference key="1">
    <citation type="submission" date="2006-02" db="EMBL/GenBank/DDBJ databases">
        <title>Complete sequence of chromosome of Jannaschia sp. CCS1.</title>
        <authorList>
            <consortium name="US DOE Joint Genome Institute"/>
            <person name="Copeland A."/>
            <person name="Lucas S."/>
            <person name="Lapidus A."/>
            <person name="Barry K."/>
            <person name="Detter J.C."/>
            <person name="Glavina del Rio T."/>
            <person name="Hammon N."/>
            <person name="Israni S."/>
            <person name="Pitluck S."/>
            <person name="Brettin T."/>
            <person name="Bruce D."/>
            <person name="Han C."/>
            <person name="Tapia R."/>
            <person name="Gilna P."/>
            <person name="Chertkov O."/>
            <person name="Saunders E."/>
            <person name="Schmutz J."/>
            <person name="Larimer F."/>
            <person name="Land M."/>
            <person name="Kyrpides N."/>
            <person name="Lykidis A."/>
            <person name="Moran M.A."/>
            <person name="Belas R."/>
            <person name="Ye W."/>
            <person name="Buchan A."/>
            <person name="Gonzalez J.M."/>
            <person name="Schell M.A."/>
            <person name="Richardson P."/>
        </authorList>
    </citation>
    <scope>NUCLEOTIDE SEQUENCE [LARGE SCALE GENOMIC DNA]</scope>
    <source>
        <strain>CCS1</strain>
    </source>
</reference>
<sequence>MPQTYAGQKRIRKFYGKIREVLEMPNLIEVQKSSYDLFLKSGDQLEPMDGEGIKGVFQSVFPIKDFNETAILEFVKYELETPKFDVEECQQRDLTYAAPLKVTLRLIVFDIDEDTGAKSVKDIKEQDVFMGDMPLMTPNGTFVVNGTERVIVSQMHRSPGVFFDHDKGKTHSSGKLLFACRIIPYRGSWLDFEFDAKDIVFSRIDRRRKLPVTTLLYALGLDQEGIMDAYYDTVTFKMVKNKGWSTKFFPERVRGTRPTTDLVDAKTGEVIAEAGKKVTPRAVKKWIDEGSIENLLVPFDGIVGRFAAKDIINEETGAIYVEAGDELTWELDKAGEVSGGTLKELIDAGITEIPVLDIDNVNVGPYMRNTLAVDKNLNRESALMDIYRVMRPGEPPTVEAASNLFDQLFFDSERYDLSAVGRVKMNMRLDLDAEDTMRTLRKEDIISCIKALVELRDGRGDIDDIDHLGNRRVRSVGELMENQYRVGLLRMERAIKERMSSVEIDTVMPQDLINAKPAAAAVREFFGSSQLSQFMDQTNPLSEVTHKRRLSALGPGGLTRERAGFEVRDVHPTHYGRMCPIETPEGPNIGLINSLATYARVNKYGFIETPYRRVNDAVVSDDVVYMSATEEMRHTVAQANANLDDDGKFVNDMVNTRMSGEYTLNPREAIDLIDVSPKQLVSVAASLIPFLENDDANRALMGSNMQRQAVPLLQADAPFVGTGIESVVAKDSGAAIMAKRGGVIDQVDAQRIVIRATEDLELGDAGVDIYRLRKFQRSNQNTCINQRPLVKVGDKIGKGEVIADGPSTDIGELALGKNVIVAFMPWNGYNYEDSILISERISRDDVFTSIHIEEFEVAARDTKLGPEEITRDIPNVGEEALRNLDEAGIVYIGAEVEPGDILVGKITPKGESPMTPEEKLLRAIFGEKASDVRDTSLRVKPGDYGTIVEVRVFNRHGVEKDERALQIEREEVERLARDRDDELVILERNIYARLRGMIMGKTAVKGPKGVKPNTVIDEDLLDGQLSRGQWWQLALEDEKDAAHIEALNQQFDTQKRALDHRFEDKVEKVRRGDDLPPGVMKMVKVFIAVKRKLQPGDKMAGRHGNKGVISKVVPMEDMPFLADGTPVDFVLNPLGVPSRMNVGQILETHMGWAARGMGLQIDEALDEYRRSGDMTPVRDALKIAYGDDVYDDAFADRDEESLLEAAGNVTKGVPIATPVFDGAKEADVNDALIRAGFSTSGQSKLFDGRTGEQFAREVTVGVKYLLKLHHLVDDKIHARSTGPYSLVTQQPLGGKAQFGGQRFGEMEVWALEAYGAAYTLQEMLTVKSDDVAGRTKVYESIVKGEDNFEAGVPESFNVLVKEVRGLGLNMELLDAEDDEGGIAAE</sequence>
<protein>
    <recommendedName>
        <fullName evidence="1">DNA-directed RNA polymerase subunit beta</fullName>
        <shortName evidence="1">RNAP subunit beta</shortName>
        <ecNumber evidence="1">2.7.7.6</ecNumber>
    </recommendedName>
    <alternativeName>
        <fullName evidence="1">RNA polymerase subunit beta</fullName>
    </alternativeName>
    <alternativeName>
        <fullName evidence="1">Transcriptase subunit beta</fullName>
    </alternativeName>
</protein>
<accession>Q28UX7</accession>
<feature type="chain" id="PRO_0000300328" description="DNA-directed RNA polymerase subunit beta">
    <location>
        <begin position="1"/>
        <end position="1385"/>
    </location>
</feature>
<gene>
    <name evidence="1" type="primary">rpoB</name>
    <name type="ordered locus">Jann_0568</name>
</gene>
<keyword id="KW-0240">DNA-directed RNA polymerase</keyword>
<keyword id="KW-0548">Nucleotidyltransferase</keyword>
<keyword id="KW-1185">Reference proteome</keyword>
<keyword id="KW-0804">Transcription</keyword>
<keyword id="KW-0808">Transferase</keyword>
<evidence type="ECO:0000255" key="1">
    <source>
        <dbReference type="HAMAP-Rule" id="MF_01321"/>
    </source>
</evidence>
<evidence type="ECO:0000305" key="2"/>